<proteinExistence type="evidence at protein level"/>
<accession>P33406</accession>
<evidence type="ECO:0000269" key="1">
    <source>
    </source>
</evidence>
<evidence type="ECO:0007829" key="2">
    <source>
        <dbReference type="PDB" id="5LND"/>
    </source>
</evidence>
<reference key="1">
    <citation type="journal article" date="1993" name="Mol. Microbiol.">
        <title>The Myf fibrillae of Yersinia enterocolitica.</title>
        <authorList>
            <person name="Iriarte M."/>
            <person name="Vanooteghem J.-C."/>
            <person name="Delor I."/>
            <person name="Diaz R."/>
            <person name="Knutton S."/>
            <person name="Cornelis G.R."/>
        </authorList>
    </citation>
    <scope>NUCLEOTIDE SEQUENCE [GENOMIC DNA]</scope>
    <scope>PROTEIN SEQUENCE OF 30-54</scope>
    <source>
        <strain>W1024 / Serotype O:9</strain>
    </source>
</reference>
<feature type="signal peptide" evidence="1">
    <location>
        <begin position="1"/>
        <end position="29"/>
    </location>
</feature>
<feature type="chain" id="PRO_0000009239" description="Fimbrial protein MyfA">
    <location>
        <begin position="30"/>
        <end position="159"/>
    </location>
</feature>
<feature type="strand" evidence="2">
    <location>
        <begin position="52"/>
        <end position="57"/>
    </location>
</feature>
<feature type="strand" evidence="2">
    <location>
        <begin position="62"/>
        <end position="66"/>
    </location>
</feature>
<feature type="strand" evidence="2">
    <location>
        <begin position="71"/>
        <end position="79"/>
    </location>
</feature>
<feature type="strand" evidence="2">
    <location>
        <begin position="86"/>
        <end position="91"/>
    </location>
</feature>
<feature type="helix" evidence="2">
    <location>
        <begin position="93"/>
        <end position="95"/>
    </location>
</feature>
<feature type="turn" evidence="2">
    <location>
        <begin position="96"/>
        <end position="98"/>
    </location>
</feature>
<feature type="strand" evidence="2">
    <location>
        <begin position="99"/>
        <end position="101"/>
    </location>
</feature>
<feature type="strand" evidence="2">
    <location>
        <begin position="107"/>
        <end position="109"/>
    </location>
</feature>
<feature type="strand" evidence="2">
    <location>
        <begin position="111"/>
        <end position="118"/>
    </location>
</feature>
<feature type="strand" evidence="2">
    <location>
        <begin position="121"/>
        <end position="125"/>
    </location>
</feature>
<feature type="strand" evidence="2">
    <location>
        <begin position="128"/>
        <end position="137"/>
    </location>
</feature>
<feature type="strand" evidence="2">
    <location>
        <begin position="147"/>
        <end position="157"/>
    </location>
</feature>
<gene>
    <name type="primary">myfA</name>
</gene>
<organism>
    <name type="scientific">Yersinia enterocolitica</name>
    <dbReference type="NCBI Taxonomy" id="630"/>
    <lineage>
        <taxon>Bacteria</taxon>
        <taxon>Pseudomonadati</taxon>
        <taxon>Pseudomonadota</taxon>
        <taxon>Gammaproteobacteria</taxon>
        <taxon>Enterobacterales</taxon>
        <taxon>Yersiniaceae</taxon>
        <taxon>Yersinia</taxon>
    </lineage>
</organism>
<keyword id="KW-0002">3D-structure</keyword>
<keyword id="KW-0903">Direct protein sequencing</keyword>
<keyword id="KW-0281">Fimbrium</keyword>
<keyword id="KW-0732">Signal</keyword>
<keyword id="KW-0843">Virulence</keyword>
<sequence length="159" mass="17368">MNMKKFVKKPLAIAVLMLASGGMVNMVHAEPTVINSKDISATKTVKEGGSFSVEFKATENEIVSGKLDADTPAFHLVMSDSGEHKGWNVRPTGASEGGQMVSADGTRVDLHTNELSWDNDHWWIDDGSERVEATFFLAAGDEVKAGEYQFTGRVEEYVE</sequence>
<comment type="function">
    <text>Major pilus subunit. Expressed only in pathogenic serotypes, it is part of myf, a probable virulence factor.</text>
</comment>
<comment type="subunit">
    <text>Forms a homomer composed of subunits assembled in a large structure resistant to proteases and chaotropic agents.</text>
</comment>
<comment type="subcellular location">
    <subcellularLocation>
        <location>Fimbrium</location>
    </subcellularLocation>
</comment>
<name>MYFA_YEREN</name>
<dbReference type="EMBL" id="Z21953">
    <property type="protein sequence ID" value="CAA79951.1"/>
    <property type="molecule type" value="Genomic_DNA"/>
</dbReference>
<dbReference type="PIR" id="S39361">
    <property type="entry name" value="S39361"/>
</dbReference>
<dbReference type="RefSeq" id="WP_005161785.1">
    <property type="nucleotide sequence ID" value="NZ_WJHZ01000009.1"/>
</dbReference>
<dbReference type="PDB" id="5LN8">
    <property type="method" value="X-ray"/>
    <property type="resolution" value="1.65 A"/>
    <property type="chains" value="A/B=51-159"/>
</dbReference>
<dbReference type="PDB" id="5LND">
    <property type="method" value="X-ray"/>
    <property type="resolution" value="1.46 A"/>
    <property type="chains" value="A/B=50-159"/>
</dbReference>
<dbReference type="PDB" id="5LO7">
    <property type="method" value="X-ray"/>
    <property type="resolution" value="1.90 A"/>
    <property type="chains" value="A/B=30-47, A/B=51-159"/>
</dbReference>
<dbReference type="PDBsum" id="5LN8"/>
<dbReference type="PDBsum" id="5LND"/>
<dbReference type="PDBsum" id="5LO7"/>
<dbReference type="SMR" id="P33406"/>
<dbReference type="UniLectin" id="P33406"/>
<dbReference type="GeneID" id="31408500"/>
<dbReference type="GO" id="GO:0009289">
    <property type="term" value="C:pilus"/>
    <property type="evidence" value="ECO:0007669"/>
    <property type="project" value="UniProtKB-SubCell"/>
</dbReference>
<dbReference type="CDD" id="cd18777">
    <property type="entry name" value="PsaA_MyfA"/>
    <property type="match status" value="1"/>
</dbReference>
<dbReference type="Gene3D" id="2.60.40.3590">
    <property type="match status" value="2"/>
</dbReference>
<dbReference type="InterPro" id="IPR053731">
    <property type="entry name" value="Fimbrial_Virulence_Factor"/>
</dbReference>
<dbReference type="InterPro" id="IPR048725">
    <property type="entry name" value="MyfA_PsaA"/>
</dbReference>
<dbReference type="NCBIfam" id="NF037938">
    <property type="entry name" value="Myr_Ysa_major"/>
    <property type="match status" value="1"/>
</dbReference>
<dbReference type="Pfam" id="PF21462">
    <property type="entry name" value="PsaS"/>
    <property type="match status" value="1"/>
</dbReference>
<protein>
    <recommendedName>
        <fullName>Fimbrial protein MyfA</fullName>
    </recommendedName>
    <alternativeName>
        <fullName>C-AG</fullName>
    </alternativeName>
    <alternativeName>
        <fullName>Myf antigen</fullName>
    </alternativeName>
</protein>